<name>GYRB_PSEAE</name>
<gene>
    <name evidence="1" type="primary">gyrB</name>
    <name type="ordered locus">PA0004</name>
</gene>
<evidence type="ECO:0000255" key="1">
    <source>
        <dbReference type="HAMAP-Rule" id="MF_01898"/>
    </source>
</evidence>
<evidence type="ECO:0007829" key="2">
    <source>
        <dbReference type="PDB" id="7PTF"/>
    </source>
</evidence>
<sequence length="806" mass="90189">MSENNTYDSSSIKVLKGLDAVRKRPGMYIGDTDDGTGLHHMVFEVVDNSIDEALAGYCSEISITIHTDESITVRDNGRGIPVDIHKEEGVSAAEVIMTVLHAGGKFDDNTYKVSGGLHGVGVSVVNALSHELRLTIRRHNKVWEQVYHHGVPQFPLREVGETDGSGTEVHFKPSPETFSNIHFSWDILAKRIRELSFLNSGVGILLRDERTGKEELFKYEGGLKAFVEYLNTNKTAVNEVFHFNVQREEDGVGVEVALQWNDSFNENLLCFTNNIPQRDGGTHLAGFRSALTRNLNNYIEAEGLAKKFKIATTGDDAREGLTAIISVKVPDPKFSSQTKDKLVSSEVKTAVEQEMGKYFADFLLENPNEAKAVVGKMIDAARAREAARKAREMTRRKGALDIAGLPGKLADCQEKDPALSELYIVEGDSAGGSAKQGRNRRTQAILPLKGKILNVEKARFDKMLSSQEVGTLITALGCGIGREEYNIDKLRYHNIIIMTDADVDGSHIRTLLLTFFFRQMPELIERGYIYIAQPPLYKVKRGKQEQYIKDDQAMEEYMTQSALEDASLHVNEHAPGLSGAALEKLVNEYRGVIATLKRLSRLYPQELTEHFIYLPTVSVDDLANESAMQGWLEKFQARLTAAEKSGLTYKASLREDRERHLWLPEVELVAHGLSSYVTFNRDFFASNDYRSVSLLGDQLNSLLEDGAYVQKGERKRPISAFKDGLDWLMAEGTKRHSIQRYKGLGEMNPEQLWETTMDPNVRRMLKVTIEDAIAADQIFNTLMGDAVEPRRDFIESNALAVSNLDV</sequence>
<keyword id="KW-0002">3D-structure</keyword>
<keyword id="KW-0067">ATP-binding</keyword>
<keyword id="KW-0963">Cytoplasm</keyword>
<keyword id="KW-0238">DNA-binding</keyword>
<keyword id="KW-0413">Isomerase</keyword>
<keyword id="KW-0460">Magnesium</keyword>
<keyword id="KW-0479">Metal-binding</keyword>
<keyword id="KW-0547">Nucleotide-binding</keyword>
<keyword id="KW-1185">Reference proteome</keyword>
<keyword id="KW-0799">Topoisomerase</keyword>
<reference key="1">
    <citation type="journal article" date="2000" name="Nature">
        <title>Complete genome sequence of Pseudomonas aeruginosa PAO1, an opportunistic pathogen.</title>
        <authorList>
            <person name="Stover C.K."/>
            <person name="Pham X.-Q.T."/>
            <person name="Erwin A.L."/>
            <person name="Mizoguchi S.D."/>
            <person name="Warrener P."/>
            <person name="Hickey M.J."/>
            <person name="Brinkman F.S.L."/>
            <person name="Hufnagle W.O."/>
            <person name="Kowalik D.J."/>
            <person name="Lagrou M."/>
            <person name="Garber R.L."/>
            <person name="Goltry L."/>
            <person name="Tolentino E."/>
            <person name="Westbrock-Wadman S."/>
            <person name="Yuan Y."/>
            <person name="Brody L.L."/>
            <person name="Coulter S.N."/>
            <person name="Folger K.R."/>
            <person name="Kas A."/>
            <person name="Larbig K."/>
            <person name="Lim R.M."/>
            <person name="Smith K.A."/>
            <person name="Spencer D.H."/>
            <person name="Wong G.K.-S."/>
            <person name="Wu Z."/>
            <person name="Paulsen I.T."/>
            <person name="Reizer J."/>
            <person name="Saier M.H. Jr."/>
            <person name="Hancock R.E.W."/>
            <person name="Lory S."/>
            <person name="Olson M.V."/>
        </authorList>
    </citation>
    <scope>NUCLEOTIDE SEQUENCE [LARGE SCALE GENOMIC DNA]</scope>
    <source>
        <strain>ATCC 15692 / DSM 22644 / CIP 104116 / JCM 14847 / LMG 12228 / 1C / PRS 101 / PAO1</strain>
    </source>
</reference>
<protein>
    <recommendedName>
        <fullName evidence="1">DNA gyrase subunit B</fullName>
        <ecNumber evidence="1">5.6.2.2</ecNumber>
    </recommendedName>
</protein>
<feature type="chain" id="PRO_0000287820" description="DNA gyrase subunit B">
    <location>
        <begin position="1"/>
        <end position="806"/>
    </location>
</feature>
<feature type="domain" description="Toprim" evidence="1">
    <location>
        <begin position="420"/>
        <end position="535"/>
    </location>
</feature>
<feature type="binding site" evidence="1">
    <location>
        <position position="426"/>
    </location>
    <ligand>
        <name>Mg(2+)</name>
        <dbReference type="ChEBI" id="CHEBI:18420"/>
        <label>1</label>
        <note>catalytic</note>
    </ligand>
</feature>
<feature type="binding site" evidence="1">
    <location>
        <position position="500"/>
    </location>
    <ligand>
        <name>Mg(2+)</name>
        <dbReference type="ChEBI" id="CHEBI:18420"/>
        <label>1</label>
        <note>catalytic</note>
    </ligand>
</feature>
<feature type="binding site" evidence="1">
    <location>
        <position position="500"/>
    </location>
    <ligand>
        <name>Mg(2+)</name>
        <dbReference type="ChEBI" id="CHEBI:18420"/>
        <label>2</label>
    </ligand>
</feature>
<feature type="binding site" evidence="1">
    <location>
        <position position="502"/>
    </location>
    <ligand>
        <name>Mg(2+)</name>
        <dbReference type="ChEBI" id="CHEBI:18420"/>
        <label>2</label>
    </ligand>
</feature>
<feature type="site" description="Interaction with DNA" evidence="1">
    <location>
        <position position="451"/>
    </location>
</feature>
<feature type="site" description="Interaction with DNA" evidence="1">
    <location>
        <position position="454"/>
    </location>
</feature>
<feature type="helix" evidence="2">
    <location>
        <begin position="11"/>
        <end position="23"/>
    </location>
</feature>
<feature type="helix" evidence="2">
    <location>
        <begin position="26"/>
        <end position="29"/>
    </location>
</feature>
<feature type="strand" evidence="2">
    <location>
        <begin position="32"/>
        <end position="35"/>
    </location>
</feature>
<feature type="helix" evidence="2">
    <location>
        <begin position="36"/>
        <end position="54"/>
    </location>
</feature>
<feature type="strand" evidence="2">
    <location>
        <begin position="60"/>
        <end position="65"/>
    </location>
</feature>
<feature type="strand" evidence="2">
    <location>
        <begin position="71"/>
        <end position="75"/>
    </location>
</feature>
<feature type="turn" evidence="2">
    <location>
        <begin position="86"/>
        <end position="88"/>
    </location>
</feature>
<feature type="strand" evidence="2">
    <location>
        <begin position="89"/>
        <end position="91"/>
    </location>
</feature>
<feature type="helix" evidence="2">
    <location>
        <begin position="92"/>
        <end position="98"/>
    </location>
</feature>
<feature type="turn" evidence="2">
    <location>
        <begin position="100"/>
        <end position="103"/>
    </location>
</feature>
<feature type="turn" evidence="2">
    <location>
        <begin position="108"/>
        <end position="110"/>
    </location>
</feature>
<feature type="helix" evidence="2">
    <location>
        <begin position="111"/>
        <end position="114"/>
    </location>
</feature>
<feature type="helix" evidence="2">
    <location>
        <begin position="116"/>
        <end position="120"/>
    </location>
</feature>
<feature type="helix" evidence="2">
    <location>
        <begin position="123"/>
        <end position="127"/>
    </location>
</feature>
<feature type="strand" evidence="2">
    <location>
        <begin position="129"/>
        <end position="138"/>
    </location>
</feature>
<feature type="strand" evidence="2">
    <location>
        <begin position="141"/>
        <end position="148"/>
    </location>
</feature>
<feature type="strand" evidence="2">
    <location>
        <begin position="151"/>
        <end position="154"/>
    </location>
</feature>
<feature type="strand" evidence="2">
    <location>
        <begin position="157"/>
        <end position="161"/>
    </location>
</feature>
<feature type="strand" evidence="2">
    <location>
        <begin position="166"/>
        <end position="173"/>
    </location>
</feature>
<feature type="turn" evidence="2">
    <location>
        <begin position="175"/>
        <end position="177"/>
    </location>
</feature>
<feature type="helix" evidence="2">
    <location>
        <begin position="185"/>
        <end position="198"/>
    </location>
</feature>
<feature type="strand" evidence="2">
    <location>
        <begin position="203"/>
        <end position="208"/>
    </location>
</feature>
<feature type="turn" evidence="2">
    <location>
        <begin position="209"/>
        <end position="211"/>
    </location>
</feature>
<feature type="strand" evidence="2">
    <location>
        <begin position="214"/>
        <end position="217"/>
    </location>
</feature>
<organism>
    <name type="scientific">Pseudomonas aeruginosa (strain ATCC 15692 / DSM 22644 / CIP 104116 / JCM 14847 / LMG 12228 / 1C / PRS 101 / PAO1)</name>
    <dbReference type="NCBI Taxonomy" id="208964"/>
    <lineage>
        <taxon>Bacteria</taxon>
        <taxon>Pseudomonadati</taxon>
        <taxon>Pseudomonadota</taxon>
        <taxon>Gammaproteobacteria</taxon>
        <taxon>Pseudomonadales</taxon>
        <taxon>Pseudomonadaceae</taxon>
        <taxon>Pseudomonas</taxon>
    </lineage>
</organism>
<dbReference type="EC" id="5.6.2.2" evidence="1"/>
<dbReference type="EMBL" id="AE004091">
    <property type="protein sequence ID" value="AAG03394.1"/>
    <property type="molecule type" value="Genomic_DNA"/>
</dbReference>
<dbReference type="PIR" id="H83644">
    <property type="entry name" value="H83644"/>
</dbReference>
<dbReference type="RefSeq" id="NP_064724.1">
    <property type="nucleotide sequence ID" value="NC_002516.2"/>
</dbReference>
<dbReference type="RefSeq" id="WP_003097268.1">
    <property type="nucleotide sequence ID" value="NZ_QZGE01000012.1"/>
</dbReference>
<dbReference type="PDB" id="6M1J">
    <property type="method" value="X-ray"/>
    <property type="resolution" value="1.70 A"/>
    <property type="chains" value="A/B=17-221"/>
</dbReference>
<dbReference type="PDB" id="6M1S">
    <property type="method" value="X-ray"/>
    <property type="resolution" value="2.25 A"/>
    <property type="chains" value="A/B=17-221"/>
</dbReference>
<dbReference type="PDB" id="7PTF">
    <property type="method" value="X-ray"/>
    <property type="resolution" value="1.32 A"/>
    <property type="chains" value="A/B/C=1-221"/>
</dbReference>
<dbReference type="PDB" id="7PTG">
    <property type="method" value="X-ray"/>
    <property type="resolution" value="2.20 A"/>
    <property type="chains" value="A/B=1-221"/>
</dbReference>
<dbReference type="PDB" id="8BN6">
    <property type="method" value="X-ray"/>
    <property type="resolution" value="1.60 A"/>
    <property type="chains" value="A=1-221"/>
</dbReference>
<dbReference type="PDBsum" id="6M1J"/>
<dbReference type="PDBsum" id="6M1S"/>
<dbReference type="PDBsum" id="7PTF"/>
<dbReference type="PDBsum" id="7PTG"/>
<dbReference type="PDBsum" id="8BN6"/>
<dbReference type="SMR" id="Q9I7C2"/>
<dbReference type="FunCoup" id="Q9I7C2">
    <property type="interactions" value="531"/>
</dbReference>
<dbReference type="STRING" id="208964.PA0004"/>
<dbReference type="ChEMBL" id="CHEMBL3390828"/>
<dbReference type="PaxDb" id="208964-PA0004"/>
<dbReference type="GeneID" id="879230"/>
<dbReference type="KEGG" id="pae:PA0004"/>
<dbReference type="PATRIC" id="fig|208964.12.peg.4"/>
<dbReference type="PseudoCAP" id="PA0004"/>
<dbReference type="HOGENOM" id="CLU_006146_4_1_6"/>
<dbReference type="InParanoid" id="Q9I7C2"/>
<dbReference type="OrthoDB" id="9802808at2"/>
<dbReference type="PhylomeDB" id="Q9I7C2"/>
<dbReference type="BioCyc" id="PAER208964:G1FZ6-4-MONOMER"/>
<dbReference type="Proteomes" id="UP000002438">
    <property type="component" value="Chromosome"/>
</dbReference>
<dbReference type="GO" id="GO:0005694">
    <property type="term" value="C:chromosome"/>
    <property type="evidence" value="ECO:0007669"/>
    <property type="project" value="InterPro"/>
</dbReference>
<dbReference type="GO" id="GO:0005737">
    <property type="term" value="C:cytoplasm"/>
    <property type="evidence" value="ECO:0007669"/>
    <property type="project" value="UniProtKB-SubCell"/>
</dbReference>
<dbReference type="GO" id="GO:0005524">
    <property type="term" value="F:ATP binding"/>
    <property type="evidence" value="ECO:0007669"/>
    <property type="project" value="UniProtKB-UniRule"/>
</dbReference>
<dbReference type="GO" id="GO:0003677">
    <property type="term" value="F:DNA binding"/>
    <property type="evidence" value="ECO:0007669"/>
    <property type="project" value="UniProtKB-KW"/>
</dbReference>
<dbReference type="GO" id="GO:0003918">
    <property type="term" value="F:DNA topoisomerase type II (double strand cut, ATP-hydrolyzing) activity"/>
    <property type="evidence" value="ECO:0000318"/>
    <property type="project" value="GO_Central"/>
</dbReference>
<dbReference type="GO" id="GO:0046872">
    <property type="term" value="F:metal ion binding"/>
    <property type="evidence" value="ECO:0007669"/>
    <property type="project" value="UniProtKB-KW"/>
</dbReference>
<dbReference type="GO" id="GO:0006265">
    <property type="term" value="P:DNA topological change"/>
    <property type="evidence" value="ECO:0000318"/>
    <property type="project" value="GO_Central"/>
</dbReference>
<dbReference type="GO" id="GO:0006261">
    <property type="term" value="P:DNA-templated DNA replication"/>
    <property type="evidence" value="ECO:0007669"/>
    <property type="project" value="UniProtKB-UniRule"/>
</dbReference>
<dbReference type="CDD" id="cd16928">
    <property type="entry name" value="HATPase_GyrB-like"/>
    <property type="match status" value="1"/>
</dbReference>
<dbReference type="CDD" id="cd00822">
    <property type="entry name" value="TopoII_Trans_DNA_gyrase"/>
    <property type="match status" value="1"/>
</dbReference>
<dbReference type="CDD" id="cd03366">
    <property type="entry name" value="TOPRIM_TopoIIA_GyrB"/>
    <property type="match status" value="1"/>
</dbReference>
<dbReference type="FunFam" id="3.10.20.690:FF:000002">
    <property type="entry name" value="DNA gyrase subunit B"/>
    <property type="match status" value="1"/>
</dbReference>
<dbReference type="FunFam" id="3.30.230.10:FF:000005">
    <property type="entry name" value="DNA gyrase subunit B"/>
    <property type="match status" value="1"/>
</dbReference>
<dbReference type="FunFam" id="3.30.565.10:FF:000002">
    <property type="entry name" value="DNA gyrase subunit B"/>
    <property type="match status" value="1"/>
</dbReference>
<dbReference type="FunFam" id="3.40.50.670:FF:000004">
    <property type="entry name" value="DNA gyrase subunit B"/>
    <property type="match status" value="1"/>
</dbReference>
<dbReference type="FunFam" id="3.40.50.670:FF:000005">
    <property type="entry name" value="DNA gyrase subunit B"/>
    <property type="match status" value="1"/>
</dbReference>
<dbReference type="Gene3D" id="3.10.20.690">
    <property type="match status" value="1"/>
</dbReference>
<dbReference type="Gene3D" id="3.30.230.10">
    <property type="match status" value="1"/>
</dbReference>
<dbReference type="Gene3D" id="3.40.50.670">
    <property type="match status" value="2"/>
</dbReference>
<dbReference type="Gene3D" id="3.30.565.10">
    <property type="entry name" value="Histidine kinase-like ATPase, C-terminal domain"/>
    <property type="match status" value="1"/>
</dbReference>
<dbReference type="HAMAP" id="MF_01898">
    <property type="entry name" value="GyrB"/>
    <property type="match status" value="1"/>
</dbReference>
<dbReference type="InterPro" id="IPR002288">
    <property type="entry name" value="DNA_gyrase_B_C"/>
</dbReference>
<dbReference type="InterPro" id="IPR011557">
    <property type="entry name" value="GyrB"/>
</dbReference>
<dbReference type="InterPro" id="IPR049353">
    <property type="entry name" value="GyrB_hook"/>
</dbReference>
<dbReference type="InterPro" id="IPR041423">
    <property type="entry name" value="GyrB_insert"/>
</dbReference>
<dbReference type="InterPro" id="IPR036890">
    <property type="entry name" value="HATPase_C_sf"/>
</dbReference>
<dbReference type="InterPro" id="IPR020568">
    <property type="entry name" value="Ribosomal_Su5_D2-typ_SF"/>
</dbReference>
<dbReference type="InterPro" id="IPR014721">
    <property type="entry name" value="Ribsml_uS5_D2-typ_fold_subgr"/>
</dbReference>
<dbReference type="InterPro" id="IPR001241">
    <property type="entry name" value="Topo_IIA"/>
</dbReference>
<dbReference type="InterPro" id="IPR013760">
    <property type="entry name" value="Topo_IIA-like_dom_sf"/>
</dbReference>
<dbReference type="InterPro" id="IPR000565">
    <property type="entry name" value="Topo_IIA_B"/>
</dbReference>
<dbReference type="InterPro" id="IPR013759">
    <property type="entry name" value="Topo_IIA_B_C"/>
</dbReference>
<dbReference type="InterPro" id="IPR013506">
    <property type="entry name" value="Topo_IIA_bsu_dom2"/>
</dbReference>
<dbReference type="InterPro" id="IPR018522">
    <property type="entry name" value="TopoIIA_CS"/>
</dbReference>
<dbReference type="InterPro" id="IPR006171">
    <property type="entry name" value="TOPRIM_dom"/>
</dbReference>
<dbReference type="InterPro" id="IPR034160">
    <property type="entry name" value="TOPRIM_GyrB"/>
</dbReference>
<dbReference type="NCBIfam" id="TIGR01059">
    <property type="entry name" value="gyrB"/>
    <property type="match status" value="1"/>
</dbReference>
<dbReference type="NCBIfam" id="NF004189">
    <property type="entry name" value="PRK05644.1"/>
    <property type="match status" value="1"/>
</dbReference>
<dbReference type="NCBIfam" id="NF011501">
    <property type="entry name" value="PRK14939.1"/>
    <property type="match status" value="1"/>
</dbReference>
<dbReference type="PANTHER" id="PTHR45866:SF1">
    <property type="entry name" value="DNA GYRASE SUBUNIT B, MITOCHONDRIAL"/>
    <property type="match status" value="1"/>
</dbReference>
<dbReference type="PANTHER" id="PTHR45866">
    <property type="entry name" value="DNA GYRASE/TOPOISOMERASE SUBUNIT B"/>
    <property type="match status" value="1"/>
</dbReference>
<dbReference type="Pfam" id="PF00204">
    <property type="entry name" value="DNA_gyraseB"/>
    <property type="match status" value="1"/>
</dbReference>
<dbReference type="Pfam" id="PF00986">
    <property type="entry name" value="DNA_gyraseB_C"/>
    <property type="match status" value="1"/>
</dbReference>
<dbReference type="Pfam" id="PF21249">
    <property type="entry name" value="GyrB_hook"/>
    <property type="match status" value="1"/>
</dbReference>
<dbReference type="Pfam" id="PF18053">
    <property type="entry name" value="GyrB_insert"/>
    <property type="match status" value="1"/>
</dbReference>
<dbReference type="Pfam" id="PF02518">
    <property type="entry name" value="HATPase_c"/>
    <property type="match status" value="1"/>
</dbReference>
<dbReference type="Pfam" id="PF01751">
    <property type="entry name" value="Toprim"/>
    <property type="match status" value="1"/>
</dbReference>
<dbReference type="PRINTS" id="PR01159">
    <property type="entry name" value="DNAGYRASEB"/>
</dbReference>
<dbReference type="PRINTS" id="PR00418">
    <property type="entry name" value="TPI2FAMILY"/>
</dbReference>
<dbReference type="SMART" id="SM00387">
    <property type="entry name" value="HATPase_c"/>
    <property type="match status" value="1"/>
</dbReference>
<dbReference type="SMART" id="SM00433">
    <property type="entry name" value="TOP2c"/>
    <property type="match status" value="1"/>
</dbReference>
<dbReference type="SUPFAM" id="SSF55874">
    <property type="entry name" value="ATPase domain of HSP90 chaperone/DNA topoisomerase II/histidine kinase"/>
    <property type="match status" value="1"/>
</dbReference>
<dbReference type="SUPFAM" id="SSF54211">
    <property type="entry name" value="Ribosomal protein S5 domain 2-like"/>
    <property type="match status" value="1"/>
</dbReference>
<dbReference type="SUPFAM" id="SSF56719">
    <property type="entry name" value="Type II DNA topoisomerase"/>
    <property type="match status" value="1"/>
</dbReference>
<dbReference type="PROSITE" id="PS00177">
    <property type="entry name" value="TOPOISOMERASE_II"/>
    <property type="match status" value="1"/>
</dbReference>
<dbReference type="PROSITE" id="PS50880">
    <property type="entry name" value="TOPRIM"/>
    <property type="match status" value="1"/>
</dbReference>
<comment type="function">
    <text evidence="1">A type II topoisomerase that negatively supercoils closed circular double-stranded (ds) DNA in an ATP-dependent manner to modulate DNA topology and maintain chromosomes in an underwound state. Negative supercoiling favors strand separation, and DNA replication, transcription, recombination and repair, all of which involve strand separation. Also able to catalyze the interconversion of other topological isomers of dsDNA rings, including catenanes and knotted rings. Type II topoisomerases break and join 2 DNA strands simultaneously in an ATP-dependent manner.</text>
</comment>
<comment type="catalytic activity">
    <reaction evidence="1">
        <text>ATP-dependent breakage, passage and rejoining of double-stranded DNA.</text>
        <dbReference type="EC" id="5.6.2.2"/>
    </reaction>
</comment>
<comment type="cofactor">
    <cofactor evidence="1">
        <name>Mg(2+)</name>
        <dbReference type="ChEBI" id="CHEBI:18420"/>
    </cofactor>
    <cofactor evidence="1">
        <name>Mn(2+)</name>
        <dbReference type="ChEBI" id="CHEBI:29035"/>
    </cofactor>
    <cofactor evidence="1">
        <name>Ca(2+)</name>
        <dbReference type="ChEBI" id="CHEBI:29108"/>
    </cofactor>
    <text evidence="1">Binds two Mg(2+) per subunit. The magnesium ions form salt bridges with both the protein and the DNA. Can also accept other divalent metal cations, such as Mn(2+) or Ca(2+).</text>
</comment>
<comment type="subunit">
    <text evidence="1">Heterotetramer, composed of two GyrA and two GyrB chains. In the heterotetramer, GyrA contains the active site tyrosine that forms a transient covalent intermediate with DNA, while GyrB binds cofactors and catalyzes ATP hydrolysis.</text>
</comment>
<comment type="subcellular location">
    <subcellularLocation>
        <location evidence="1">Cytoplasm</location>
    </subcellularLocation>
</comment>
<comment type="miscellaneous">
    <text evidence="1">Few gyrases are as efficient as E.coli at forming negative supercoils. Not all organisms have 2 type II topoisomerases; in organisms with a single type II topoisomerase this enzyme also has to decatenate newly replicated chromosomes.</text>
</comment>
<comment type="similarity">
    <text evidence="1">Belongs to the type II topoisomerase GyrB family.</text>
</comment>
<accession>Q9I7C2</accession>
<proteinExistence type="evidence at protein level"/>